<reference key="1">
    <citation type="submission" date="2006-11" db="EMBL/GenBank/DDBJ databases">
        <title>Identification and characterization of a new conjugation/ type IVA secretion system (trb/tra) of L. pneumophila Corby localized on a mobile genomic island.</title>
        <authorList>
            <person name="Gloeckner G."/>
            <person name="Albert-Weissenberger C."/>
            <person name="Weinmann E."/>
            <person name="Jacobi S."/>
            <person name="Schunder E."/>
            <person name="Steinert M."/>
            <person name="Buchrieser C."/>
            <person name="Hacker J."/>
            <person name="Heuner K."/>
        </authorList>
    </citation>
    <scope>NUCLEOTIDE SEQUENCE [LARGE SCALE GENOMIC DNA]</scope>
    <source>
        <strain>Corby</strain>
    </source>
</reference>
<protein>
    <recommendedName>
        <fullName evidence="2">Elongation factor Tu</fullName>
        <shortName evidence="2">EF-Tu</shortName>
        <ecNumber evidence="2">3.6.5.3</ecNumber>
    </recommendedName>
</protein>
<name>EFTU_LEGPC</name>
<dbReference type="EC" id="3.6.5.3" evidence="2"/>
<dbReference type="EMBL" id="CP000675">
    <property type="protein sequence ID" value="ABQ56916.1"/>
    <property type="molecule type" value="Genomic_DNA"/>
</dbReference>
<dbReference type="EMBL" id="CP000675">
    <property type="protein sequence ID" value="ABQ56927.1"/>
    <property type="molecule type" value="Genomic_DNA"/>
</dbReference>
<dbReference type="SMR" id="A5IHR6"/>
<dbReference type="KEGG" id="lpc:LPC_3015"/>
<dbReference type="KEGG" id="lpc:LPC_3028"/>
<dbReference type="HOGENOM" id="CLU_007265_0_2_6"/>
<dbReference type="GO" id="GO:0005829">
    <property type="term" value="C:cytosol"/>
    <property type="evidence" value="ECO:0007669"/>
    <property type="project" value="TreeGrafter"/>
</dbReference>
<dbReference type="GO" id="GO:0005525">
    <property type="term" value="F:GTP binding"/>
    <property type="evidence" value="ECO:0007669"/>
    <property type="project" value="UniProtKB-UniRule"/>
</dbReference>
<dbReference type="GO" id="GO:0003924">
    <property type="term" value="F:GTPase activity"/>
    <property type="evidence" value="ECO:0007669"/>
    <property type="project" value="InterPro"/>
</dbReference>
<dbReference type="GO" id="GO:0097216">
    <property type="term" value="F:guanosine tetraphosphate binding"/>
    <property type="evidence" value="ECO:0007669"/>
    <property type="project" value="UniProtKB-ARBA"/>
</dbReference>
<dbReference type="GO" id="GO:0003746">
    <property type="term" value="F:translation elongation factor activity"/>
    <property type="evidence" value="ECO:0007669"/>
    <property type="project" value="UniProtKB-UniRule"/>
</dbReference>
<dbReference type="CDD" id="cd01884">
    <property type="entry name" value="EF_Tu"/>
    <property type="match status" value="1"/>
</dbReference>
<dbReference type="CDD" id="cd03697">
    <property type="entry name" value="EFTU_II"/>
    <property type="match status" value="1"/>
</dbReference>
<dbReference type="CDD" id="cd03707">
    <property type="entry name" value="EFTU_III"/>
    <property type="match status" value="1"/>
</dbReference>
<dbReference type="FunFam" id="2.40.30.10:FF:000001">
    <property type="entry name" value="Elongation factor Tu"/>
    <property type="match status" value="1"/>
</dbReference>
<dbReference type="FunFam" id="3.40.50.300:FF:000003">
    <property type="entry name" value="Elongation factor Tu"/>
    <property type="match status" value="1"/>
</dbReference>
<dbReference type="Gene3D" id="3.40.50.300">
    <property type="entry name" value="P-loop containing nucleotide triphosphate hydrolases"/>
    <property type="match status" value="1"/>
</dbReference>
<dbReference type="Gene3D" id="2.40.30.10">
    <property type="entry name" value="Translation factors"/>
    <property type="match status" value="2"/>
</dbReference>
<dbReference type="HAMAP" id="MF_00118_B">
    <property type="entry name" value="EF_Tu_B"/>
    <property type="match status" value="1"/>
</dbReference>
<dbReference type="InterPro" id="IPR041709">
    <property type="entry name" value="EF-Tu_GTP-bd"/>
</dbReference>
<dbReference type="InterPro" id="IPR050055">
    <property type="entry name" value="EF-Tu_GTPase"/>
</dbReference>
<dbReference type="InterPro" id="IPR004161">
    <property type="entry name" value="EFTu-like_2"/>
</dbReference>
<dbReference type="InterPro" id="IPR033720">
    <property type="entry name" value="EFTU_2"/>
</dbReference>
<dbReference type="InterPro" id="IPR031157">
    <property type="entry name" value="G_TR_CS"/>
</dbReference>
<dbReference type="InterPro" id="IPR027417">
    <property type="entry name" value="P-loop_NTPase"/>
</dbReference>
<dbReference type="InterPro" id="IPR005225">
    <property type="entry name" value="Small_GTP-bd"/>
</dbReference>
<dbReference type="InterPro" id="IPR000795">
    <property type="entry name" value="T_Tr_GTP-bd_dom"/>
</dbReference>
<dbReference type="InterPro" id="IPR009000">
    <property type="entry name" value="Transl_B-barrel_sf"/>
</dbReference>
<dbReference type="InterPro" id="IPR009001">
    <property type="entry name" value="Transl_elong_EF1A/Init_IF2_C"/>
</dbReference>
<dbReference type="InterPro" id="IPR004541">
    <property type="entry name" value="Transl_elong_EFTu/EF1A_bac/org"/>
</dbReference>
<dbReference type="InterPro" id="IPR004160">
    <property type="entry name" value="Transl_elong_EFTu/EF1A_C"/>
</dbReference>
<dbReference type="NCBIfam" id="TIGR00485">
    <property type="entry name" value="EF-Tu"/>
    <property type="match status" value="1"/>
</dbReference>
<dbReference type="NCBIfam" id="NF000766">
    <property type="entry name" value="PRK00049.1"/>
    <property type="match status" value="1"/>
</dbReference>
<dbReference type="NCBIfam" id="NF009372">
    <property type="entry name" value="PRK12735.1"/>
    <property type="match status" value="1"/>
</dbReference>
<dbReference type="NCBIfam" id="NF009373">
    <property type="entry name" value="PRK12736.1"/>
    <property type="match status" value="1"/>
</dbReference>
<dbReference type="NCBIfam" id="TIGR00231">
    <property type="entry name" value="small_GTP"/>
    <property type="match status" value="1"/>
</dbReference>
<dbReference type="PANTHER" id="PTHR43721:SF22">
    <property type="entry name" value="ELONGATION FACTOR TU, MITOCHONDRIAL"/>
    <property type="match status" value="1"/>
</dbReference>
<dbReference type="PANTHER" id="PTHR43721">
    <property type="entry name" value="ELONGATION FACTOR TU-RELATED"/>
    <property type="match status" value="1"/>
</dbReference>
<dbReference type="Pfam" id="PF00009">
    <property type="entry name" value="GTP_EFTU"/>
    <property type="match status" value="1"/>
</dbReference>
<dbReference type="Pfam" id="PF03144">
    <property type="entry name" value="GTP_EFTU_D2"/>
    <property type="match status" value="1"/>
</dbReference>
<dbReference type="Pfam" id="PF03143">
    <property type="entry name" value="GTP_EFTU_D3"/>
    <property type="match status" value="1"/>
</dbReference>
<dbReference type="PRINTS" id="PR00315">
    <property type="entry name" value="ELONGATNFCT"/>
</dbReference>
<dbReference type="SUPFAM" id="SSF50465">
    <property type="entry name" value="EF-Tu/eEF-1alpha/eIF2-gamma C-terminal domain"/>
    <property type="match status" value="1"/>
</dbReference>
<dbReference type="SUPFAM" id="SSF52540">
    <property type="entry name" value="P-loop containing nucleoside triphosphate hydrolases"/>
    <property type="match status" value="1"/>
</dbReference>
<dbReference type="SUPFAM" id="SSF50447">
    <property type="entry name" value="Translation proteins"/>
    <property type="match status" value="1"/>
</dbReference>
<dbReference type="PROSITE" id="PS00301">
    <property type="entry name" value="G_TR_1"/>
    <property type="match status" value="1"/>
</dbReference>
<dbReference type="PROSITE" id="PS51722">
    <property type="entry name" value="G_TR_2"/>
    <property type="match status" value="1"/>
</dbReference>
<accession>A5IHR6</accession>
<proteinExistence type="inferred from homology"/>
<feature type="chain" id="PRO_0000337421" description="Elongation factor Tu">
    <location>
        <begin position="1"/>
        <end position="396"/>
    </location>
</feature>
<feature type="domain" description="tr-type G">
    <location>
        <begin position="10"/>
        <end position="206"/>
    </location>
</feature>
<feature type="region of interest" description="G1" evidence="1">
    <location>
        <begin position="19"/>
        <end position="26"/>
    </location>
</feature>
<feature type="region of interest" description="G2" evidence="1">
    <location>
        <begin position="60"/>
        <end position="64"/>
    </location>
</feature>
<feature type="region of interest" description="G3" evidence="1">
    <location>
        <begin position="81"/>
        <end position="84"/>
    </location>
</feature>
<feature type="region of interest" description="G4" evidence="1">
    <location>
        <begin position="136"/>
        <end position="139"/>
    </location>
</feature>
<feature type="region of interest" description="G5" evidence="1">
    <location>
        <begin position="174"/>
        <end position="176"/>
    </location>
</feature>
<feature type="binding site" evidence="2">
    <location>
        <begin position="19"/>
        <end position="26"/>
    </location>
    <ligand>
        <name>GTP</name>
        <dbReference type="ChEBI" id="CHEBI:37565"/>
    </ligand>
</feature>
<feature type="binding site" evidence="2">
    <location>
        <position position="26"/>
    </location>
    <ligand>
        <name>Mg(2+)</name>
        <dbReference type="ChEBI" id="CHEBI:18420"/>
    </ligand>
</feature>
<feature type="binding site" evidence="2">
    <location>
        <begin position="81"/>
        <end position="85"/>
    </location>
    <ligand>
        <name>GTP</name>
        <dbReference type="ChEBI" id="CHEBI:37565"/>
    </ligand>
</feature>
<feature type="binding site" evidence="2">
    <location>
        <begin position="136"/>
        <end position="139"/>
    </location>
    <ligand>
        <name>GTP</name>
        <dbReference type="ChEBI" id="CHEBI:37565"/>
    </ligand>
</feature>
<gene>
    <name evidence="2" type="primary">tuf1</name>
    <name type="synonym">tufA</name>
    <name type="ordered locus">LPC_3015</name>
</gene>
<gene>
    <name evidence="2" type="primary">tuf2</name>
    <name type="ordered locus">LPC_3028</name>
</gene>
<comment type="function">
    <text evidence="2">GTP hydrolase that promotes the GTP-dependent binding of aminoacyl-tRNA to the A-site of ribosomes during protein biosynthesis.</text>
</comment>
<comment type="catalytic activity">
    <reaction evidence="2">
        <text>GTP + H2O = GDP + phosphate + H(+)</text>
        <dbReference type="Rhea" id="RHEA:19669"/>
        <dbReference type="ChEBI" id="CHEBI:15377"/>
        <dbReference type="ChEBI" id="CHEBI:15378"/>
        <dbReference type="ChEBI" id="CHEBI:37565"/>
        <dbReference type="ChEBI" id="CHEBI:43474"/>
        <dbReference type="ChEBI" id="CHEBI:58189"/>
        <dbReference type="EC" id="3.6.5.3"/>
    </reaction>
    <physiologicalReaction direction="left-to-right" evidence="2">
        <dbReference type="Rhea" id="RHEA:19670"/>
    </physiologicalReaction>
</comment>
<comment type="subunit">
    <text evidence="2">Monomer.</text>
</comment>
<comment type="subcellular location">
    <subcellularLocation>
        <location evidence="2">Cytoplasm</location>
    </subcellularLocation>
</comment>
<comment type="similarity">
    <text evidence="2">Belongs to the TRAFAC class translation factor GTPase superfamily. Classic translation factor GTPase family. EF-Tu/EF-1A subfamily.</text>
</comment>
<organism>
    <name type="scientific">Legionella pneumophila (strain Corby)</name>
    <dbReference type="NCBI Taxonomy" id="400673"/>
    <lineage>
        <taxon>Bacteria</taxon>
        <taxon>Pseudomonadati</taxon>
        <taxon>Pseudomonadota</taxon>
        <taxon>Gammaproteobacteria</taxon>
        <taxon>Legionellales</taxon>
        <taxon>Legionellaceae</taxon>
        <taxon>Legionella</taxon>
    </lineage>
</organism>
<keyword id="KW-0963">Cytoplasm</keyword>
<keyword id="KW-0251">Elongation factor</keyword>
<keyword id="KW-0342">GTP-binding</keyword>
<keyword id="KW-0378">Hydrolase</keyword>
<keyword id="KW-0460">Magnesium</keyword>
<keyword id="KW-0479">Metal-binding</keyword>
<keyword id="KW-0547">Nucleotide-binding</keyword>
<keyword id="KW-0648">Protein biosynthesis</keyword>
<evidence type="ECO:0000250" key="1"/>
<evidence type="ECO:0000255" key="2">
    <source>
        <dbReference type="HAMAP-Rule" id="MF_00118"/>
    </source>
</evidence>
<sequence>MAKEKFERKKPHVNVGTIGHVDHGKTTLTAAITTIMAKKYGGTAKAYDQIDAAPEERERGITISTAHVEYESASRHYAHVDCPGHADYVKNMITGAAQMDGAILVVSAADGPMPQTREHILLSRQVGVPYIVVFMNKADMVDDPELLELVEMEVRDLLSSYDFPGDDIPIVVGSALKALEGEDSDIGVKAIEKLVETMDSYIPEPVRNIDKPFLLPIEDVFSISGRGTVVTGRVESGIVKVGEEVEIVGIRDTQKTTCTGVEMFRKLLDEGRAGDNVGVLLRGTKRDEVERGQVLAKPGTIKPHTKFEAEVYVLSKEEGGRHTPFFNGYRPQFYFRTTDVTGTCDLPSGVEMVMPGDNVQLVVSLHAPIAMDEGLRFAIREGGRTVGAGVVAKIIE</sequence>